<protein>
    <recommendedName>
        <fullName>UBX domain-containing protein 4</fullName>
    </recommendedName>
</protein>
<name>UBX4_SCHPO</name>
<sequence>MATIYACRGFHRVPVKLSPSSTLQEVILSSYKQLGFSDWHNLELLHGDKKVDTSLLLRLSGIINGAKLIVKESATNQSGKSSSSISPQSKKIKVALQLPGAARIIDEASSETSIKQLLERHSLLTKVSHVLINGRNFKSEEFDNPLLLYGIREGSILIRLFPIKAQQSIVSEQAPVSQTFNGDVKEKKNADLMDIESENKKDDIVESFPKYPVDAHKLLEPLPTPIPSLPSTPSSYQNLPSQSLTGESLPTVSNQEKDEGVIEKVAVNNTPSVSSKSPFPKKKSFSSMLAQVKKEKAENNGSDGYDLQPTKSQLELYQSILRKRANQVSSTSLTKSSSPKPLPSSAIVKFDFGNGKSIVHEFSKDDNIETLRAFVASHLSPEESTSFQLTFSNYEALPTTGLIVEHIGRAVVRVHTISDPVYAQR</sequence>
<organism>
    <name type="scientific">Schizosaccharomyces pombe (strain 972 / ATCC 24843)</name>
    <name type="common">Fission yeast</name>
    <dbReference type="NCBI Taxonomy" id="284812"/>
    <lineage>
        <taxon>Eukaryota</taxon>
        <taxon>Fungi</taxon>
        <taxon>Dikarya</taxon>
        <taxon>Ascomycota</taxon>
        <taxon>Taphrinomycotina</taxon>
        <taxon>Schizosaccharomycetes</taxon>
        <taxon>Schizosaccharomycetales</taxon>
        <taxon>Schizosaccharomycetaceae</taxon>
        <taxon>Schizosaccharomyces</taxon>
    </lineage>
</organism>
<evidence type="ECO:0000250" key="1"/>
<evidence type="ECO:0000255" key="2">
    <source>
        <dbReference type="PROSITE-ProRule" id="PRU00215"/>
    </source>
</evidence>
<evidence type="ECO:0000256" key="3">
    <source>
        <dbReference type="SAM" id="MobiDB-lite"/>
    </source>
</evidence>
<evidence type="ECO:0000269" key="4">
    <source>
    </source>
</evidence>
<keyword id="KW-0963">Cytoplasm</keyword>
<keyword id="KW-0539">Nucleus</keyword>
<keyword id="KW-0597">Phosphoprotein</keyword>
<keyword id="KW-1185">Reference proteome</keyword>
<keyword id="KW-0833">Ubl conjugation pathway</keyword>
<feature type="chain" id="PRO_0000210996" description="UBX domain-containing protein 4">
    <location>
        <begin position="1"/>
        <end position="425"/>
    </location>
</feature>
<feature type="domain" description="UBX" evidence="2">
    <location>
        <begin position="341"/>
        <end position="390"/>
    </location>
</feature>
<feature type="region of interest" description="Disordered" evidence="3">
    <location>
        <begin position="224"/>
        <end position="257"/>
    </location>
</feature>
<feature type="compositionally biased region" description="Polar residues" evidence="3">
    <location>
        <begin position="236"/>
        <end position="254"/>
    </location>
</feature>
<feature type="modified residue" description="Phosphoserine" evidence="4">
    <location>
        <position position="338"/>
    </location>
</feature>
<proteinExistence type="evidence at protein level"/>
<gene>
    <name type="primary">ubx4</name>
    <name type="ORF">SPBC21C3.11</name>
</gene>
<dbReference type="EMBL" id="CU329671">
    <property type="protein sequence ID" value="CAB76047.1"/>
    <property type="molecule type" value="Genomic_DNA"/>
</dbReference>
<dbReference type="EMBL" id="AB027785">
    <property type="protein sequence ID" value="BAA87089.1"/>
    <property type="molecule type" value="Genomic_DNA"/>
</dbReference>
<dbReference type="PIR" id="T50355">
    <property type="entry name" value="T50355"/>
</dbReference>
<dbReference type="RefSeq" id="NP_596591.1">
    <property type="nucleotide sequence ID" value="NM_001022511.2"/>
</dbReference>
<dbReference type="SMR" id="Q9P7L2"/>
<dbReference type="BioGRID" id="277102">
    <property type="interactions" value="3"/>
</dbReference>
<dbReference type="FunCoup" id="Q9P7L2">
    <property type="interactions" value="129"/>
</dbReference>
<dbReference type="iPTMnet" id="Q9P7L2"/>
<dbReference type="PaxDb" id="4896-SPBC21C3.11.1"/>
<dbReference type="EnsemblFungi" id="SPBC21C3.11.1">
    <property type="protein sequence ID" value="SPBC21C3.11.1:pep"/>
    <property type="gene ID" value="SPBC21C3.11"/>
</dbReference>
<dbReference type="GeneID" id="2540575"/>
<dbReference type="KEGG" id="spo:2540575"/>
<dbReference type="PomBase" id="SPBC21C3.11">
    <property type="gene designation" value="ubx4"/>
</dbReference>
<dbReference type="VEuPathDB" id="FungiDB:SPBC21C3.11"/>
<dbReference type="HOGENOM" id="CLU_576406_0_0_1"/>
<dbReference type="InParanoid" id="Q9P7L2"/>
<dbReference type="OMA" id="MATIYAC"/>
<dbReference type="PRO" id="PR:Q9P7L2"/>
<dbReference type="Proteomes" id="UP000002485">
    <property type="component" value="Chromosome II"/>
</dbReference>
<dbReference type="GO" id="GO:0005737">
    <property type="term" value="C:cytoplasm"/>
    <property type="evidence" value="ECO:0007005"/>
    <property type="project" value="PomBase"/>
</dbReference>
<dbReference type="GO" id="GO:0005829">
    <property type="term" value="C:cytosol"/>
    <property type="evidence" value="ECO:0007005"/>
    <property type="project" value="PomBase"/>
</dbReference>
<dbReference type="GO" id="GO:0005634">
    <property type="term" value="C:nucleus"/>
    <property type="evidence" value="ECO:0007005"/>
    <property type="project" value="PomBase"/>
</dbReference>
<dbReference type="GO" id="GO:0012506">
    <property type="term" value="C:vesicle membrane"/>
    <property type="evidence" value="ECO:0000318"/>
    <property type="project" value="GO_Central"/>
</dbReference>
<dbReference type="GO" id="GO:0006886">
    <property type="term" value="P:intracellular protein transport"/>
    <property type="evidence" value="ECO:0000318"/>
    <property type="project" value="GO_Central"/>
</dbReference>
<dbReference type="GO" id="GO:0006511">
    <property type="term" value="P:ubiquitin-dependent protein catabolic process"/>
    <property type="evidence" value="ECO:0000266"/>
    <property type="project" value="PomBase"/>
</dbReference>
<dbReference type="CDD" id="cd01767">
    <property type="entry name" value="UBX"/>
    <property type="match status" value="1"/>
</dbReference>
<dbReference type="Gene3D" id="3.10.20.90">
    <property type="entry name" value="Phosphatidylinositol 3-kinase Catalytic Subunit, Chain A, domain 1"/>
    <property type="match status" value="1"/>
</dbReference>
<dbReference type="InterPro" id="IPR021569">
    <property type="entry name" value="TUG-UBL1"/>
</dbReference>
<dbReference type="InterPro" id="IPR029071">
    <property type="entry name" value="Ubiquitin-like_domsf"/>
</dbReference>
<dbReference type="InterPro" id="IPR001012">
    <property type="entry name" value="UBX_dom"/>
</dbReference>
<dbReference type="PANTHER" id="PTHR46467">
    <property type="entry name" value="TETHER CONTAINING UBX DOMAIN FOR GLUT4"/>
    <property type="match status" value="1"/>
</dbReference>
<dbReference type="PANTHER" id="PTHR46467:SF1">
    <property type="entry name" value="TETHER CONTAINING UBX DOMAIN FOR GLUT4"/>
    <property type="match status" value="1"/>
</dbReference>
<dbReference type="Pfam" id="PF11470">
    <property type="entry name" value="TUG-UBL1"/>
    <property type="match status" value="1"/>
</dbReference>
<dbReference type="Pfam" id="PF00789">
    <property type="entry name" value="UBX"/>
    <property type="match status" value="1"/>
</dbReference>
<dbReference type="SUPFAM" id="SSF54236">
    <property type="entry name" value="Ubiquitin-like"/>
    <property type="match status" value="2"/>
</dbReference>
<dbReference type="PROSITE" id="PS50033">
    <property type="entry name" value="UBX"/>
    <property type="match status" value="1"/>
</dbReference>
<comment type="function">
    <text evidence="1">Involved in CDC48-dependent protein degradation through the ubiquitin/proteasome pathway.</text>
</comment>
<comment type="subcellular location">
    <subcellularLocation>
        <location>Cytoplasm</location>
    </subcellularLocation>
    <subcellularLocation>
        <location>Nucleus</location>
    </subcellularLocation>
</comment>
<reference key="1">
    <citation type="journal article" date="2002" name="Nature">
        <title>The genome sequence of Schizosaccharomyces pombe.</title>
        <authorList>
            <person name="Wood V."/>
            <person name="Gwilliam R."/>
            <person name="Rajandream M.A."/>
            <person name="Lyne M.H."/>
            <person name="Lyne R."/>
            <person name="Stewart A."/>
            <person name="Sgouros J.G."/>
            <person name="Peat N."/>
            <person name="Hayles J."/>
            <person name="Baker S.G."/>
            <person name="Basham D."/>
            <person name="Bowman S."/>
            <person name="Brooks K."/>
            <person name="Brown D."/>
            <person name="Brown S."/>
            <person name="Chillingworth T."/>
            <person name="Churcher C.M."/>
            <person name="Collins M."/>
            <person name="Connor R."/>
            <person name="Cronin A."/>
            <person name="Davis P."/>
            <person name="Feltwell T."/>
            <person name="Fraser A."/>
            <person name="Gentles S."/>
            <person name="Goble A."/>
            <person name="Hamlin N."/>
            <person name="Harris D.E."/>
            <person name="Hidalgo J."/>
            <person name="Hodgson G."/>
            <person name="Holroyd S."/>
            <person name="Hornsby T."/>
            <person name="Howarth S."/>
            <person name="Huckle E.J."/>
            <person name="Hunt S."/>
            <person name="Jagels K."/>
            <person name="James K.D."/>
            <person name="Jones L."/>
            <person name="Jones M."/>
            <person name="Leather S."/>
            <person name="McDonald S."/>
            <person name="McLean J."/>
            <person name="Mooney P."/>
            <person name="Moule S."/>
            <person name="Mungall K.L."/>
            <person name="Murphy L.D."/>
            <person name="Niblett D."/>
            <person name="Odell C."/>
            <person name="Oliver K."/>
            <person name="O'Neil S."/>
            <person name="Pearson D."/>
            <person name="Quail M.A."/>
            <person name="Rabbinowitsch E."/>
            <person name="Rutherford K.M."/>
            <person name="Rutter S."/>
            <person name="Saunders D."/>
            <person name="Seeger K."/>
            <person name="Sharp S."/>
            <person name="Skelton J."/>
            <person name="Simmonds M.N."/>
            <person name="Squares R."/>
            <person name="Squares S."/>
            <person name="Stevens K."/>
            <person name="Taylor K."/>
            <person name="Taylor R.G."/>
            <person name="Tivey A."/>
            <person name="Walsh S.V."/>
            <person name="Warren T."/>
            <person name="Whitehead S."/>
            <person name="Woodward J.R."/>
            <person name="Volckaert G."/>
            <person name="Aert R."/>
            <person name="Robben J."/>
            <person name="Grymonprez B."/>
            <person name="Weltjens I."/>
            <person name="Vanstreels E."/>
            <person name="Rieger M."/>
            <person name="Schaefer M."/>
            <person name="Mueller-Auer S."/>
            <person name="Gabel C."/>
            <person name="Fuchs M."/>
            <person name="Duesterhoeft A."/>
            <person name="Fritzc C."/>
            <person name="Holzer E."/>
            <person name="Moestl D."/>
            <person name="Hilbert H."/>
            <person name="Borzym K."/>
            <person name="Langer I."/>
            <person name="Beck A."/>
            <person name="Lehrach H."/>
            <person name="Reinhardt R."/>
            <person name="Pohl T.M."/>
            <person name="Eger P."/>
            <person name="Zimmermann W."/>
            <person name="Wedler H."/>
            <person name="Wambutt R."/>
            <person name="Purnelle B."/>
            <person name="Goffeau A."/>
            <person name="Cadieu E."/>
            <person name="Dreano S."/>
            <person name="Gloux S."/>
            <person name="Lelaure V."/>
            <person name="Mottier S."/>
            <person name="Galibert F."/>
            <person name="Aves S.J."/>
            <person name="Xiang Z."/>
            <person name="Hunt C."/>
            <person name="Moore K."/>
            <person name="Hurst S.M."/>
            <person name="Lucas M."/>
            <person name="Rochet M."/>
            <person name="Gaillardin C."/>
            <person name="Tallada V.A."/>
            <person name="Garzon A."/>
            <person name="Thode G."/>
            <person name="Daga R.R."/>
            <person name="Cruzado L."/>
            <person name="Jimenez J."/>
            <person name="Sanchez M."/>
            <person name="del Rey F."/>
            <person name="Benito J."/>
            <person name="Dominguez A."/>
            <person name="Revuelta J.L."/>
            <person name="Moreno S."/>
            <person name="Armstrong J."/>
            <person name="Forsburg S.L."/>
            <person name="Cerutti L."/>
            <person name="Lowe T."/>
            <person name="McCombie W.R."/>
            <person name="Paulsen I."/>
            <person name="Potashkin J."/>
            <person name="Shpakovski G.V."/>
            <person name="Ussery D."/>
            <person name="Barrell B.G."/>
            <person name="Nurse P."/>
        </authorList>
    </citation>
    <scope>NUCLEOTIDE SEQUENCE [LARGE SCALE GENOMIC DNA]</scope>
    <source>
        <strain>972 / ATCC 24843</strain>
    </source>
</reference>
<reference key="2">
    <citation type="journal article" date="2000" name="Genes Cells">
        <title>Large-scale screening of intracellular protein localization in living fission yeast cells by the use of a GFP-fusion genomic DNA library.</title>
        <authorList>
            <person name="Ding D.-Q."/>
            <person name="Tomita Y."/>
            <person name="Yamamoto A."/>
            <person name="Chikashige Y."/>
            <person name="Haraguchi T."/>
            <person name="Hiraoka Y."/>
        </authorList>
    </citation>
    <scope>NUCLEOTIDE SEQUENCE [LARGE SCALE GENOMIC DNA] OF 172-302</scope>
    <scope>SUBCELLULAR LOCATION</scope>
    <source>
        <strain>ATCC 38364 / 968</strain>
    </source>
</reference>
<reference key="3">
    <citation type="journal article" date="2006" name="Nat. Biotechnol.">
        <title>ORFeome cloning and global analysis of protein localization in the fission yeast Schizosaccharomyces pombe.</title>
        <authorList>
            <person name="Matsuyama A."/>
            <person name="Arai R."/>
            <person name="Yashiroda Y."/>
            <person name="Shirai A."/>
            <person name="Kamata A."/>
            <person name="Sekido S."/>
            <person name="Kobayashi Y."/>
            <person name="Hashimoto A."/>
            <person name="Hamamoto M."/>
            <person name="Hiraoka Y."/>
            <person name="Horinouchi S."/>
            <person name="Yoshida M."/>
        </authorList>
    </citation>
    <scope>SUBCELLULAR LOCATION [LARGE SCALE ANALYSIS]</scope>
</reference>
<reference key="4">
    <citation type="journal article" date="2008" name="J. Proteome Res.">
        <title>Phosphoproteome analysis of fission yeast.</title>
        <authorList>
            <person name="Wilson-Grady J.T."/>
            <person name="Villen J."/>
            <person name="Gygi S.P."/>
        </authorList>
    </citation>
    <scope>PHOSPHORYLATION [LARGE SCALE ANALYSIS] AT SER-338</scope>
    <scope>IDENTIFICATION BY MASS SPECTROMETRY</scope>
</reference>
<accession>Q9P7L2</accession>
<accession>Q9UU66</accession>